<protein>
    <recommendedName>
        <fullName evidence="1">Protein ApaG</fullName>
    </recommendedName>
</protein>
<name>APAG_XYLFT</name>
<gene>
    <name evidence="1" type="primary">apaG</name>
    <name type="ordered locus">PD_1209</name>
</gene>
<feature type="chain" id="PRO_0000197973" description="Protein ApaG">
    <location>
        <begin position="1"/>
        <end position="127"/>
    </location>
</feature>
<feature type="domain" description="ApaG" evidence="1">
    <location>
        <begin position="3"/>
        <end position="127"/>
    </location>
</feature>
<sequence length="127" mass="14240">MENNPSSKIEVAVSSRFLDQQSNRNEGRYVFAYTIRIYNAGNVPARLIARHWQITDANGKVEYVTGEGVIGEQPRLRPGEEFRYTSGVVLGTEQGQMQGHYDMMADDGTEFTATISPFVLSVPRTLH</sequence>
<evidence type="ECO:0000255" key="1">
    <source>
        <dbReference type="HAMAP-Rule" id="MF_00791"/>
    </source>
</evidence>
<organism>
    <name type="scientific">Xylella fastidiosa (strain Temecula1 / ATCC 700964)</name>
    <dbReference type="NCBI Taxonomy" id="183190"/>
    <lineage>
        <taxon>Bacteria</taxon>
        <taxon>Pseudomonadati</taxon>
        <taxon>Pseudomonadota</taxon>
        <taxon>Gammaproteobacteria</taxon>
        <taxon>Lysobacterales</taxon>
        <taxon>Lysobacteraceae</taxon>
        <taxon>Xylella</taxon>
    </lineage>
</organism>
<reference key="1">
    <citation type="journal article" date="2003" name="J. Bacteriol.">
        <title>Comparative analyses of the complete genome sequences of Pierce's disease and citrus variegated chlorosis strains of Xylella fastidiosa.</title>
        <authorList>
            <person name="Van Sluys M.A."/>
            <person name="de Oliveira M.C."/>
            <person name="Monteiro-Vitorello C.B."/>
            <person name="Miyaki C.Y."/>
            <person name="Furlan L.R."/>
            <person name="Camargo L.E.A."/>
            <person name="da Silva A.C.R."/>
            <person name="Moon D.H."/>
            <person name="Takita M.A."/>
            <person name="Lemos E.G.M."/>
            <person name="Machado M.A."/>
            <person name="Ferro M.I.T."/>
            <person name="da Silva F.R."/>
            <person name="Goldman M.H.S."/>
            <person name="Goldman G.H."/>
            <person name="Lemos M.V.F."/>
            <person name="El-Dorry H."/>
            <person name="Tsai S.M."/>
            <person name="Carrer H."/>
            <person name="Carraro D.M."/>
            <person name="de Oliveira R.C."/>
            <person name="Nunes L.R."/>
            <person name="Siqueira W.J."/>
            <person name="Coutinho L.L."/>
            <person name="Kimura E.T."/>
            <person name="Ferro E.S."/>
            <person name="Harakava R."/>
            <person name="Kuramae E.E."/>
            <person name="Marino C.L."/>
            <person name="Giglioti E."/>
            <person name="Abreu I.L."/>
            <person name="Alves L.M.C."/>
            <person name="do Amaral A.M."/>
            <person name="Baia G.S."/>
            <person name="Blanco S.R."/>
            <person name="Brito M.S."/>
            <person name="Cannavan F.S."/>
            <person name="Celestino A.V."/>
            <person name="da Cunha A.F."/>
            <person name="Fenille R.C."/>
            <person name="Ferro J.A."/>
            <person name="Formighieri E.F."/>
            <person name="Kishi L.T."/>
            <person name="Leoni S.G."/>
            <person name="Oliveira A.R."/>
            <person name="Rosa V.E. Jr."/>
            <person name="Sassaki F.T."/>
            <person name="Sena J.A.D."/>
            <person name="de Souza A.A."/>
            <person name="Truffi D."/>
            <person name="Tsukumo F."/>
            <person name="Yanai G.M."/>
            <person name="Zaros L.G."/>
            <person name="Civerolo E.L."/>
            <person name="Simpson A.J.G."/>
            <person name="Almeida N.F. Jr."/>
            <person name="Setubal J.C."/>
            <person name="Kitajima J.P."/>
        </authorList>
    </citation>
    <scope>NUCLEOTIDE SEQUENCE [LARGE SCALE GENOMIC DNA]</scope>
    <source>
        <strain>Temecula1 / ATCC 700964</strain>
    </source>
</reference>
<dbReference type="EMBL" id="AE009442">
    <property type="protein sequence ID" value="AAO29060.1"/>
    <property type="molecule type" value="Genomic_DNA"/>
</dbReference>
<dbReference type="RefSeq" id="WP_004086104.1">
    <property type="nucleotide sequence ID" value="NC_004556.1"/>
</dbReference>
<dbReference type="SMR" id="Q87C84"/>
<dbReference type="KEGG" id="xft:PD_1209"/>
<dbReference type="HOGENOM" id="CLU_128074_1_0_6"/>
<dbReference type="Proteomes" id="UP000002516">
    <property type="component" value="Chromosome"/>
</dbReference>
<dbReference type="GO" id="GO:0070987">
    <property type="term" value="P:error-free translesion synthesis"/>
    <property type="evidence" value="ECO:0007669"/>
    <property type="project" value="TreeGrafter"/>
</dbReference>
<dbReference type="Gene3D" id="2.60.40.1470">
    <property type="entry name" value="ApaG domain"/>
    <property type="match status" value="1"/>
</dbReference>
<dbReference type="HAMAP" id="MF_00791">
    <property type="entry name" value="ApaG"/>
    <property type="match status" value="1"/>
</dbReference>
<dbReference type="InterPro" id="IPR007474">
    <property type="entry name" value="ApaG_domain"/>
</dbReference>
<dbReference type="InterPro" id="IPR036767">
    <property type="entry name" value="ApaG_sf"/>
</dbReference>
<dbReference type="InterPro" id="IPR023065">
    <property type="entry name" value="Uncharacterised_ApaG"/>
</dbReference>
<dbReference type="NCBIfam" id="NF003967">
    <property type="entry name" value="PRK05461.1"/>
    <property type="match status" value="1"/>
</dbReference>
<dbReference type="PANTHER" id="PTHR14289">
    <property type="entry name" value="F-BOX ONLY PROTEIN 3"/>
    <property type="match status" value="1"/>
</dbReference>
<dbReference type="PANTHER" id="PTHR14289:SF16">
    <property type="entry name" value="POLYMERASE DELTA-INTERACTING PROTEIN 2"/>
    <property type="match status" value="1"/>
</dbReference>
<dbReference type="Pfam" id="PF04379">
    <property type="entry name" value="DUF525"/>
    <property type="match status" value="1"/>
</dbReference>
<dbReference type="SUPFAM" id="SSF110069">
    <property type="entry name" value="ApaG-like"/>
    <property type="match status" value="1"/>
</dbReference>
<dbReference type="PROSITE" id="PS51087">
    <property type="entry name" value="APAG"/>
    <property type="match status" value="1"/>
</dbReference>
<proteinExistence type="inferred from homology"/>
<keyword id="KW-1185">Reference proteome</keyword>
<accession>Q87C84</accession>